<dbReference type="EMBL" id="AE005174">
    <property type="protein sequence ID" value="AAG58959.1"/>
    <property type="status" value="ALT_INIT"/>
    <property type="molecule type" value="Genomic_DNA"/>
</dbReference>
<dbReference type="EMBL" id="BA000007">
    <property type="protein sequence ID" value="BAB38121.1"/>
    <property type="molecule type" value="Genomic_DNA"/>
</dbReference>
<dbReference type="EMBL" id="AB035922">
    <property type="protein sequence ID" value="BAA93561.1"/>
    <property type="molecule type" value="Genomic_DNA"/>
</dbReference>
<dbReference type="PIR" id="B91216">
    <property type="entry name" value="B91216"/>
</dbReference>
<dbReference type="PIR" id="C86062">
    <property type="entry name" value="C86062"/>
</dbReference>
<dbReference type="RefSeq" id="NP_312725.1">
    <property type="nucleotide sequence ID" value="NC_002695.1"/>
</dbReference>
<dbReference type="RefSeq" id="WP_000379246.1">
    <property type="nucleotide sequence ID" value="NZ_VOAI01000017.1"/>
</dbReference>
<dbReference type="SMR" id="Q8XAW1"/>
<dbReference type="STRING" id="155864.Z5275"/>
<dbReference type="GeneID" id="75204755"/>
<dbReference type="GeneID" id="915303"/>
<dbReference type="KEGG" id="ece:Z5275"/>
<dbReference type="KEGG" id="ecs:ECs_4698"/>
<dbReference type="PATRIC" id="fig|386585.9.peg.4904"/>
<dbReference type="eggNOG" id="COG0583">
    <property type="taxonomic scope" value="Bacteria"/>
</dbReference>
<dbReference type="HOGENOM" id="CLU_039613_8_2_6"/>
<dbReference type="OMA" id="ESLMNTW"/>
<dbReference type="Proteomes" id="UP000000558">
    <property type="component" value="Chromosome"/>
</dbReference>
<dbReference type="Proteomes" id="UP000002519">
    <property type="component" value="Chromosome"/>
</dbReference>
<dbReference type="GO" id="GO:0003677">
    <property type="term" value="F:DNA binding"/>
    <property type="evidence" value="ECO:0007669"/>
    <property type="project" value="UniProtKB-KW"/>
</dbReference>
<dbReference type="GO" id="GO:0003700">
    <property type="term" value="F:DNA-binding transcription factor activity"/>
    <property type="evidence" value="ECO:0007669"/>
    <property type="project" value="UniProtKB-UniRule"/>
</dbReference>
<dbReference type="GO" id="GO:0045892">
    <property type="term" value="P:negative regulation of DNA-templated transcription"/>
    <property type="evidence" value="ECO:0007669"/>
    <property type="project" value="UniProtKB-UniRule"/>
</dbReference>
<dbReference type="FunFam" id="1.10.10.10:FF:000001">
    <property type="entry name" value="LysR family transcriptional regulator"/>
    <property type="match status" value="1"/>
</dbReference>
<dbReference type="Gene3D" id="3.40.190.10">
    <property type="entry name" value="Periplasmic binding protein-like II"/>
    <property type="match status" value="2"/>
</dbReference>
<dbReference type="Gene3D" id="1.10.10.10">
    <property type="entry name" value="Winged helix-like DNA-binding domain superfamily/Winged helix DNA-binding domain"/>
    <property type="match status" value="1"/>
</dbReference>
<dbReference type="HAMAP" id="MF_01233">
    <property type="entry name" value="HTH_type_HdfR"/>
    <property type="match status" value="1"/>
</dbReference>
<dbReference type="InterPro" id="IPR050176">
    <property type="entry name" value="LTTR"/>
</dbReference>
<dbReference type="InterPro" id="IPR005119">
    <property type="entry name" value="LysR_subst-bd"/>
</dbReference>
<dbReference type="InterPro" id="IPR020890">
    <property type="entry name" value="Tscrpt_reg_HTH_HdfR"/>
</dbReference>
<dbReference type="InterPro" id="IPR000847">
    <property type="entry name" value="Tscrpt_reg_HTH_LysR"/>
</dbReference>
<dbReference type="InterPro" id="IPR036388">
    <property type="entry name" value="WH-like_DNA-bd_sf"/>
</dbReference>
<dbReference type="InterPro" id="IPR036390">
    <property type="entry name" value="WH_DNA-bd_sf"/>
</dbReference>
<dbReference type="NCBIfam" id="NF002946">
    <property type="entry name" value="PRK03601.1"/>
    <property type="match status" value="1"/>
</dbReference>
<dbReference type="PANTHER" id="PTHR30579:SF8">
    <property type="entry name" value="HTH-TYPE TRANSCRIPTIONAL REGULATOR HDFR"/>
    <property type="match status" value="1"/>
</dbReference>
<dbReference type="PANTHER" id="PTHR30579">
    <property type="entry name" value="TRANSCRIPTIONAL REGULATOR"/>
    <property type="match status" value="1"/>
</dbReference>
<dbReference type="Pfam" id="PF00126">
    <property type="entry name" value="HTH_1"/>
    <property type="match status" value="1"/>
</dbReference>
<dbReference type="Pfam" id="PF03466">
    <property type="entry name" value="LysR_substrate"/>
    <property type="match status" value="1"/>
</dbReference>
<dbReference type="PRINTS" id="PR00039">
    <property type="entry name" value="HTHLYSR"/>
</dbReference>
<dbReference type="SUPFAM" id="SSF53850">
    <property type="entry name" value="Periplasmic binding protein-like II"/>
    <property type="match status" value="1"/>
</dbReference>
<dbReference type="SUPFAM" id="SSF46785">
    <property type="entry name" value="Winged helix' DNA-binding domain"/>
    <property type="match status" value="1"/>
</dbReference>
<dbReference type="PROSITE" id="PS50931">
    <property type="entry name" value="HTH_LYSR"/>
    <property type="match status" value="1"/>
</dbReference>
<sequence>MDTELLKTFLEVSRTRHFGRAAESLYLTQSAVSFRIRQLENQLGVNLFTRHRNNIRLTAAGEKLLPYAETLMSTWQAARKEVAHTSRHNEFSIGASASLWECMLNQWLGRLYQNQDAHTGLQFEARIAQRQSLVKQLHERQLDLLITTEAPKMDEFSSQLLGYFTLALYTSAPSKLKGDLNYLRLEWGPDFQQHEAGLIGADEVPILTTSSAELAQQQIAMLNGCTWLPVSWARKKGGLHTVVDSTTLSRPLYAIWLQNSDKNTLIRDLLKINVLDEVY</sequence>
<protein>
    <recommendedName>
        <fullName evidence="1">HTH-type transcriptional regulator HdfR</fullName>
    </recommendedName>
    <alternativeName>
        <fullName evidence="1">H-NS-dependent flhDC regulator</fullName>
    </alternativeName>
</protein>
<reference key="1">
    <citation type="journal article" date="2001" name="Nature">
        <title>Genome sequence of enterohaemorrhagic Escherichia coli O157:H7.</title>
        <authorList>
            <person name="Perna N.T."/>
            <person name="Plunkett G. III"/>
            <person name="Burland V."/>
            <person name="Mau B."/>
            <person name="Glasner J.D."/>
            <person name="Rose D.J."/>
            <person name="Mayhew G.F."/>
            <person name="Evans P.S."/>
            <person name="Gregor J."/>
            <person name="Kirkpatrick H.A."/>
            <person name="Posfai G."/>
            <person name="Hackett J."/>
            <person name="Klink S."/>
            <person name="Boutin A."/>
            <person name="Shao Y."/>
            <person name="Miller L."/>
            <person name="Grotbeck E.J."/>
            <person name="Davis N.W."/>
            <person name="Lim A."/>
            <person name="Dimalanta E.T."/>
            <person name="Potamousis K."/>
            <person name="Apodaca J."/>
            <person name="Anantharaman T.S."/>
            <person name="Lin J."/>
            <person name="Yen G."/>
            <person name="Schwartz D.C."/>
            <person name="Welch R.A."/>
            <person name="Blattner F.R."/>
        </authorList>
    </citation>
    <scope>NUCLEOTIDE SEQUENCE [LARGE SCALE GENOMIC DNA]</scope>
    <source>
        <strain>O157:H7 / EDL933 / ATCC 700927 / EHEC</strain>
    </source>
</reference>
<reference key="2">
    <citation type="journal article" date="2001" name="DNA Res.">
        <title>Complete genome sequence of enterohemorrhagic Escherichia coli O157:H7 and genomic comparison with a laboratory strain K-12.</title>
        <authorList>
            <person name="Hayashi T."/>
            <person name="Makino K."/>
            <person name="Ohnishi M."/>
            <person name="Kurokawa K."/>
            <person name="Ishii K."/>
            <person name="Yokoyama K."/>
            <person name="Han C.-G."/>
            <person name="Ohtsubo E."/>
            <person name="Nakayama K."/>
            <person name="Murata T."/>
            <person name="Tanaka M."/>
            <person name="Tobe T."/>
            <person name="Iida T."/>
            <person name="Takami H."/>
            <person name="Honda T."/>
            <person name="Sasakawa C."/>
            <person name="Ogasawara N."/>
            <person name="Yasunaga T."/>
            <person name="Kuhara S."/>
            <person name="Shiba T."/>
            <person name="Hattori M."/>
            <person name="Shinagawa H."/>
        </authorList>
    </citation>
    <scope>NUCLEOTIDE SEQUENCE [LARGE SCALE GENOMIC DNA]</scope>
    <source>
        <strain>O157:H7 / Sakai / RIMD 0509952 / EHEC</strain>
    </source>
</reference>
<reference key="3">
    <citation type="journal article" date="2000" name="Syst. Appl. Microbiol.">
        <title>Comparative analysis of the whole set of rRNA operons between an enterohemorrhagic Escherichia coli O157:H7 Sakai strain and an Escherichia coli K-12 strain MG1655.</title>
        <authorList>
            <person name="Ohnishi M."/>
            <person name="Murata T."/>
            <person name="Nakayama K."/>
            <person name="Kuhara S."/>
            <person name="Hattori M."/>
            <person name="Kurokawa K."/>
            <person name="Yasunaga T."/>
            <person name="Yokoyama K."/>
            <person name="Makino K."/>
            <person name="Shinagawa H."/>
            <person name="Hayashi T."/>
        </authorList>
    </citation>
    <scope>NUCLEOTIDE SEQUENCE [GENOMIC DNA] OF 97-279</scope>
    <source>
        <strain>O157:H7 / Sakai / RIMD 0509952 / EHEC</strain>
    </source>
</reference>
<keyword id="KW-0238">DNA-binding</keyword>
<keyword id="KW-1185">Reference proteome</keyword>
<keyword id="KW-0678">Repressor</keyword>
<keyword id="KW-0804">Transcription</keyword>
<keyword id="KW-0805">Transcription regulation</keyword>
<comment type="function">
    <text evidence="1">Negatively regulates the transcription of the flagellar master operon flhDC by binding to the upstream region of the operon.</text>
</comment>
<comment type="similarity">
    <text evidence="2">Belongs to the LysR transcriptional regulatory family.</text>
</comment>
<comment type="sequence caution" evidence="2">
    <conflict type="erroneous initiation">
        <sequence resource="EMBL-CDS" id="AAG58959"/>
    </conflict>
</comment>
<accession>Q8XAW1</accession>
<accession>Q9LBU6</accession>
<proteinExistence type="inferred from homology"/>
<feature type="chain" id="PRO_0000105634" description="HTH-type transcriptional regulator HdfR">
    <location>
        <begin position="1"/>
        <end position="279"/>
    </location>
</feature>
<feature type="domain" description="HTH lysR-type" evidence="1">
    <location>
        <begin position="1"/>
        <end position="58"/>
    </location>
</feature>
<feature type="DNA-binding region" description="H-T-H motif" evidence="1">
    <location>
        <begin position="18"/>
        <end position="37"/>
    </location>
</feature>
<evidence type="ECO:0000255" key="1">
    <source>
        <dbReference type="HAMAP-Rule" id="MF_01233"/>
    </source>
</evidence>
<evidence type="ECO:0000305" key="2"/>
<organism>
    <name type="scientific">Escherichia coli O157:H7</name>
    <dbReference type="NCBI Taxonomy" id="83334"/>
    <lineage>
        <taxon>Bacteria</taxon>
        <taxon>Pseudomonadati</taxon>
        <taxon>Pseudomonadota</taxon>
        <taxon>Gammaproteobacteria</taxon>
        <taxon>Enterobacterales</taxon>
        <taxon>Enterobacteriaceae</taxon>
        <taxon>Escherichia</taxon>
    </lineage>
</organism>
<name>HDFR_ECO57</name>
<gene>
    <name evidence="1" type="primary">hdfR</name>
    <name type="ordered locus">Z5275</name>
    <name type="ordered locus">ECs4698</name>
</gene>